<dbReference type="EMBL" id="M58494">
    <property type="protein sequence ID" value="AAA50467.1"/>
    <property type="molecule type" value="Genomic_DNA"/>
</dbReference>
<dbReference type="PIR" id="B39133">
    <property type="entry name" value="B39133"/>
</dbReference>
<dbReference type="SMR" id="P22089"/>
<dbReference type="STRING" id="292.WI67_21755"/>
<dbReference type="GO" id="GO:0005886">
    <property type="term" value="C:plasma membrane"/>
    <property type="evidence" value="ECO:0007669"/>
    <property type="project" value="UniProtKB-SubCell"/>
</dbReference>
<dbReference type="GO" id="GO:0051082">
    <property type="term" value="F:unfolded protein binding"/>
    <property type="evidence" value="ECO:0007669"/>
    <property type="project" value="UniProtKB-UniRule"/>
</dbReference>
<dbReference type="GO" id="GO:0016042">
    <property type="term" value="P:lipid catabolic process"/>
    <property type="evidence" value="ECO:0007669"/>
    <property type="project" value="UniProtKB-UniRule"/>
</dbReference>
<dbReference type="GO" id="GO:0006457">
    <property type="term" value="P:protein folding"/>
    <property type="evidence" value="ECO:0007669"/>
    <property type="project" value="UniProtKB-UniRule"/>
</dbReference>
<dbReference type="HAMAP" id="MF_00790">
    <property type="entry name" value="Lipase_chap"/>
    <property type="match status" value="1"/>
</dbReference>
<dbReference type="InterPro" id="IPR004961">
    <property type="entry name" value="Lipase_chaperone"/>
</dbReference>
<dbReference type="NCBIfam" id="NF002333">
    <property type="entry name" value="PRK01294.1-1"/>
    <property type="match status" value="1"/>
</dbReference>
<dbReference type="Pfam" id="PF03280">
    <property type="entry name" value="Lipase_chap"/>
    <property type="match status" value="1"/>
</dbReference>
<dbReference type="SUPFAM" id="SSF158855">
    <property type="entry name" value="Lipase chaperone-like"/>
    <property type="match status" value="1"/>
</dbReference>
<sequence length="344" mass="36446">MTARGGRAPLARRAVVYGAVGLAAIAGVAMWSGAGRHGGTGASGEPPDASAARGPAAAPPQAAVPASTSLPPSLAGSSAPRLPLDAGGHLAKARAVRDFFDYCLTAQSDLSAAGLDAFVMREIAAQLDGTVAQAEALDVWHRYRAYLDALAKLRDAGAVDKSDLGALQLALDQRASIAYRWLGDWSQPFFGAEQWRQRYDLARLKIAQDPALTDAQKAERLAALEQQMPADERAAQQRVDRQRAAIDQIAQLQKSGATPDAMRAQLTQTLGPEAAARVAQMQQDDASWQRRYADYAAQRAQIESAGLSPQDRDAQIAALRQRVFTKPGEAVRAASLDRGAGSAR</sequence>
<accession>P22089</accession>
<reference key="1">
    <citation type="journal article" date="1991" name="J. Bacteriol.">
        <title>Cloning, sequence, and expression of a lipase gene from Pseudomonas cepacia: lipase production in heterologous hosts requires two Pseudomonas genes.</title>
        <authorList>
            <person name="Joergensen S."/>
            <person name="Skov K.W."/>
            <person name="Diderichsen B."/>
        </authorList>
    </citation>
    <scope>NUCLEOTIDE SEQUENCE [GENOMIC DNA]</scope>
    <source>
        <strain>DSM 3959</strain>
    </source>
</reference>
<organism>
    <name type="scientific">Burkholderia cepacia</name>
    <name type="common">Pseudomonas cepacia</name>
    <dbReference type="NCBI Taxonomy" id="292"/>
    <lineage>
        <taxon>Bacteria</taxon>
        <taxon>Pseudomonadati</taxon>
        <taxon>Pseudomonadota</taxon>
        <taxon>Betaproteobacteria</taxon>
        <taxon>Burkholderiales</taxon>
        <taxon>Burkholderiaceae</taxon>
        <taxon>Burkholderia</taxon>
        <taxon>Burkholderia cepacia complex</taxon>
    </lineage>
</organism>
<name>LIFO1_BURCE</name>
<comment type="function">
    <text evidence="1">May be involved in the folding of the extracellular lipase during its passage through the periplasm.</text>
</comment>
<comment type="subcellular location">
    <subcellularLocation>
        <location evidence="1">Cell inner membrane</location>
        <topology evidence="1">Single-pass membrane protein</topology>
        <orientation evidence="1">Periplasmic side</orientation>
    </subcellularLocation>
</comment>
<comment type="similarity">
    <text evidence="4">Belongs to the lipase chaperone family.</text>
</comment>
<feature type="chain" id="PRO_0000218479" description="Lipase chaperone">
    <location>
        <begin position="1"/>
        <end position="344"/>
    </location>
</feature>
<feature type="transmembrane region" description="Helical" evidence="2">
    <location>
        <begin position="14"/>
        <end position="34"/>
    </location>
</feature>
<feature type="region of interest" description="Disordered" evidence="3">
    <location>
        <begin position="37"/>
        <end position="78"/>
    </location>
</feature>
<feature type="compositionally biased region" description="Low complexity" evidence="3">
    <location>
        <begin position="43"/>
        <end position="78"/>
    </location>
</feature>
<evidence type="ECO:0000250" key="1"/>
<evidence type="ECO:0000255" key="2"/>
<evidence type="ECO:0000256" key="3">
    <source>
        <dbReference type="SAM" id="MobiDB-lite"/>
    </source>
</evidence>
<evidence type="ECO:0000305" key="4"/>
<proteinExistence type="inferred from homology"/>
<protein>
    <recommendedName>
        <fullName>Lipase chaperone</fullName>
    </recommendedName>
    <alternativeName>
        <fullName>Lipase activator protein</fullName>
    </alternativeName>
    <alternativeName>
        <fullName>Lipase foldase</fullName>
    </alternativeName>
    <alternativeName>
        <fullName>Lipase helper protein</fullName>
    </alternativeName>
    <alternativeName>
        <fullName>Lipase modulator</fullName>
    </alternativeName>
</protein>
<keyword id="KW-0997">Cell inner membrane</keyword>
<keyword id="KW-1003">Cell membrane</keyword>
<keyword id="KW-0143">Chaperone</keyword>
<keyword id="KW-0442">Lipid degradation</keyword>
<keyword id="KW-0443">Lipid metabolism</keyword>
<keyword id="KW-0472">Membrane</keyword>
<keyword id="KW-0812">Transmembrane</keyword>
<keyword id="KW-1133">Transmembrane helix</keyword>
<gene>
    <name type="primary">lifO</name>
    <name type="synonym">limA</name>
    <name type="synonym">lipB</name>
</gene>